<protein>
    <recommendedName>
        <fullName evidence="1">Undecaprenyl-diphosphatase</fullName>
        <ecNumber evidence="1">3.6.1.27</ecNumber>
    </recommendedName>
    <alternativeName>
        <fullName evidence="1">Bacitracin resistance protein</fullName>
    </alternativeName>
    <alternativeName>
        <fullName evidence="1">Undecaprenyl pyrophosphate phosphatase</fullName>
    </alternativeName>
</protein>
<evidence type="ECO:0000255" key="1">
    <source>
        <dbReference type="HAMAP-Rule" id="MF_01006"/>
    </source>
</evidence>
<dbReference type="EC" id="3.6.1.27" evidence="1"/>
<dbReference type="EMBL" id="BX251411">
    <property type="protein sequence ID" value="CAD67125.1"/>
    <property type="molecule type" value="Genomic_DNA"/>
</dbReference>
<dbReference type="SMR" id="Q83HQ7"/>
<dbReference type="KEGG" id="tws:TW457"/>
<dbReference type="HOGENOM" id="CLU_060296_1_0_11"/>
<dbReference type="GO" id="GO:0005886">
    <property type="term" value="C:plasma membrane"/>
    <property type="evidence" value="ECO:0007669"/>
    <property type="project" value="UniProtKB-SubCell"/>
</dbReference>
<dbReference type="GO" id="GO:0050380">
    <property type="term" value="F:undecaprenyl-diphosphatase activity"/>
    <property type="evidence" value="ECO:0007669"/>
    <property type="project" value="UniProtKB-UniRule"/>
</dbReference>
<dbReference type="GO" id="GO:0071555">
    <property type="term" value="P:cell wall organization"/>
    <property type="evidence" value="ECO:0007669"/>
    <property type="project" value="UniProtKB-KW"/>
</dbReference>
<dbReference type="GO" id="GO:0009252">
    <property type="term" value="P:peptidoglycan biosynthetic process"/>
    <property type="evidence" value="ECO:0007669"/>
    <property type="project" value="UniProtKB-KW"/>
</dbReference>
<dbReference type="GO" id="GO:0008360">
    <property type="term" value="P:regulation of cell shape"/>
    <property type="evidence" value="ECO:0007669"/>
    <property type="project" value="UniProtKB-KW"/>
</dbReference>
<dbReference type="GO" id="GO:0046677">
    <property type="term" value="P:response to antibiotic"/>
    <property type="evidence" value="ECO:0007669"/>
    <property type="project" value="UniProtKB-UniRule"/>
</dbReference>
<dbReference type="HAMAP" id="MF_01006">
    <property type="entry name" value="Undec_diphosphatase"/>
    <property type="match status" value="1"/>
</dbReference>
<dbReference type="InterPro" id="IPR003824">
    <property type="entry name" value="UppP"/>
</dbReference>
<dbReference type="PANTHER" id="PTHR30622">
    <property type="entry name" value="UNDECAPRENYL-DIPHOSPHATASE"/>
    <property type="match status" value="1"/>
</dbReference>
<dbReference type="PANTHER" id="PTHR30622:SF4">
    <property type="entry name" value="UNDECAPRENYL-DIPHOSPHATASE"/>
    <property type="match status" value="1"/>
</dbReference>
<dbReference type="Pfam" id="PF02673">
    <property type="entry name" value="BacA"/>
    <property type="match status" value="1"/>
</dbReference>
<gene>
    <name evidence="1" type="primary">uppP</name>
    <name type="synonym">bacA</name>
    <name type="synonym">upk</name>
    <name type="ordered locus">TW457</name>
</gene>
<reference key="1">
    <citation type="journal article" date="2003" name="Lancet">
        <title>Sequencing and analysis of the genome of the Whipple's disease bacterium Tropheryma whipplei.</title>
        <authorList>
            <person name="Bentley S.D."/>
            <person name="Maiwald M."/>
            <person name="Murphy L.D."/>
            <person name="Pallen M.J."/>
            <person name="Yeats C.A."/>
            <person name="Dover L.G."/>
            <person name="Norbertczak H.T."/>
            <person name="Besra G.S."/>
            <person name="Quail M.A."/>
            <person name="Harris D.E."/>
            <person name="von Herbay A."/>
            <person name="Goble A."/>
            <person name="Rutter S."/>
            <person name="Squares R."/>
            <person name="Squares S."/>
            <person name="Barrell B.G."/>
            <person name="Parkhill J."/>
            <person name="Relman D.A."/>
        </authorList>
    </citation>
    <scope>NUCLEOTIDE SEQUENCE [LARGE SCALE GENOMIC DNA]</scope>
    <source>
        <strain>TW08/27</strain>
    </source>
</reference>
<accession>Q83HQ7</accession>
<comment type="function">
    <text evidence="1">Catalyzes the dephosphorylation of undecaprenyl diphosphate (UPP). Confers resistance to bacitracin.</text>
</comment>
<comment type="catalytic activity">
    <reaction evidence="1">
        <text>di-trans,octa-cis-undecaprenyl diphosphate + H2O = di-trans,octa-cis-undecaprenyl phosphate + phosphate + H(+)</text>
        <dbReference type="Rhea" id="RHEA:28094"/>
        <dbReference type="ChEBI" id="CHEBI:15377"/>
        <dbReference type="ChEBI" id="CHEBI:15378"/>
        <dbReference type="ChEBI" id="CHEBI:43474"/>
        <dbReference type="ChEBI" id="CHEBI:58405"/>
        <dbReference type="ChEBI" id="CHEBI:60392"/>
        <dbReference type="EC" id="3.6.1.27"/>
    </reaction>
</comment>
<comment type="subcellular location">
    <subcellularLocation>
        <location evidence="1">Cell membrane</location>
        <topology evidence="1">Multi-pass membrane protein</topology>
    </subcellularLocation>
</comment>
<comment type="miscellaneous">
    <text>Bacitracin is thought to be involved in the inhibition of peptidoglycan synthesis by sequestering undecaprenyl diphosphate, thereby reducing the pool of lipid carrier available.</text>
</comment>
<comment type="similarity">
    <text evidence="1">Belongs to the UppP family.</text>
</comment>
<feature type="chain" id="PRO_0000151232" description="Undecaprenyl-diphosphatase">
    <location>
        <begin position="1"/>
        <end position="279"/>
    </location>
</feature>
<feature type="transmembrane region" description="Helical" evidence="1">
    <location>
        <begin position="1"/>
        <end position="21"/>
    </location>
</feature>
<feature type="transmembrane region" description="Helical" evidence="1">
    <location>
        <begin position="39"/>
        <end position="59"/>
    </location>
</feature>
<feature type="transmembrane region" description="Helical" evidence="1">
    <location>
        <begin position="96"/>
        <end position="116"/>
    </location>
</feature>
<feature type="transmembrane region" description="Helical" evidence="1">
    <location>
        <begin position="128"/>
        <end position="148"/>
    </location>
</feature>
<feature type="transmembrane region" description="Helical" evidence="1">
    <location>
        <begin position="155"/>
        <end position="175"/>
    </location>
</feature>
<feature type="transmembrane region" description="Helical" evidence="1">
    <location>
        <begin position="201"/>
        <end position="221"/>
    </location>
</feature>
<feature type="transmembrane region" description="Helical" evidence="1">
    <location>
        <begin position="231"/>
        <end position="251"/>
    </location>
</feature>
<feature type="transmembrane region" description="Helical" evidence="1">
    <location>
        <begin position="259"/>
        <end position="279"/>
    </location>
</feature>
<organism>
    <name type="scientific">Tropheryma whipplei (strain TW08/27)</name>
    <name type="common">Whipple's bacillus</name>
    <dbReference type="NCBI Taxonomy" id="218496"/>
    <lineage>
        <taxon>Bacteria</taxon>
        <taxon>Bacillati</taxon>
        <taxon>Actinomycetota</taxon>
        <taxon>Actinomycetes</taxon>
        <taxon>Micrococcales</taxon>
        <taxon>Tropherymataceae</taxon>
        <taxon>Tropheryma</taxon>
    </lineage>
</organism>
<proteinExistence type="inferred from homology"/>
<sequence>MVLEAVLLGIVQGITEFLPISSTAHMYILAKLLNLHVPGRFFLSSVQLGTSFALILYFFKDVKGIISETSRSIYSFIQFGIRQKQEKRNEYTRLGLLLVTGTIPVVLLGFLLVRFVPDGFFSAARNLFTMGVALIVFGLLLGFADALFRRKKGNIFQITFIESVLIGAAQIFAIIPGVSRSGITITTARFLNFDRQLAVRFSFLLSLPVTFIGGMYGLVAGPDTDYYSLGYSLIGAIVSFVVGLLVVSALLRIISKTTFVLFVYYRVLFGLFLVIVSFF</sequence>
<keyword id="KW-0046">Antibiotic resistance</keyword>
<keyword id="KW-1003">Cell membrane</keyword>
<keyword id="KW-0133">Cell shape</keyword>
<keyword id="KW-0961">Cell wall biogenesis/degradation</keyword>
<keyword id="KW-0378">Hydrolase</keyword>
<keyword id="KW-0472">Membrane</keyword>
<keyword id="KW-0573">Peptidoglycan synthesis</keyword>
<keyword id="KW-0812">Transmembrane</keyword>
<keyword id="KW-1133">Transmembrane helix</keyword>
<name>UPPP_TROW8</name>